<protein>
    <recommendedName>
        <fullName evidence="1">ATP synthase subunit alpha, chloroplastic</fullName>
        <ecNumber evidence="1">7.1.2.2</ecNumber>
    </recommendedName>
    <alternativeName>
        <fullName evidence="1">ATP synthase F1 sector subunit alpha</fullName>
    </alternativeName>
    <alternativeName>
        <fullName evidence="1">F-ATPase subunit alpha</fullName>
    </alternativeName>
</protein>
<comment type="function">
    <text evidence="1">Produces ATP from ADP in the presence of a proton gradient across the membrane. The alpha chain is a regulatory subunit.</text>
</comment>
<comment type="catalytic activity">
    <reaction evidence="1">
        <text>ATP + H2O + 4 H(+)(in) = ADP + phosphate + 5 H(+)(out)</text>
        <dbReference type="Rhea" id="RHEA:57720"/>
        <dbReference type="ChEBI" id="CHEBI:15377"/>
        <dbReference type="ChEBI" id="CHEBI:15378"/>
        <dbReference type="ChEBI" id="CHEBI:30616"/>
        <dbReference type="ChEBI" id="CHEBI:43474"/>
        <dbReference type="ChEBI" id="CHEBI:456216"/>
        <dbReference type="EC" id="7.1.2.2"/>
    </reaction>
</comment>
<comment type="subunit">
    <text evidence="1">F-type ATPases have 2 components, CF(1) - the catalytic core - and CF(0) - the membrane proton channel. CF(1) has five subunits: alpha(3), beta(3), gamma(1), delta(1), epsilon(1). CF(0) has four main subunits: a, b, b' and c.</text>
</comment>
<comment type="subcellular location">
    <subcellularLocation>
        <location evidence="1">Plastid</location>
        <location evidence="1">Chloroplast thylakoid membrane</location>
        <topology evidence="1">Peripheral membrane protein</topology>
    </subcellularLocation>
</comment>
<comment type="similarity">
    <text evidence="1">Belongs to the ATPase alpha/beta chains family.</text>
</comment>
<geneLocation type="chloroplast"/>
<dbReference type="EC" id="7.1.2.2" evidence="1"/>
<dbReference type="EMBL" id="AP006715">
    <property type="protein sequence ID" value="BAE92366.1"/>
    <property type="molecule type" value="Genomic_DNA"/>
</dbReference>
<dbReference type="RefSeq" id="YP_536923.1">
    <property type="nucleotide sequence ID" value="NC_007932.1"/>
</dbReference>
<dbReference type="SMR" id="Q1XDP5"/>
<dbReference type="GeneID" id="3978833"/>
<dbReference type="GO" id="GO:0009535">
    <property type="term" value="C:chloroplast thylakoid membrane"/>
    <property type="evidence" value="ECO:0007669"/>
    <property type="project" value="UniProtKB-SubCell"/>
</dbReference>
<dbReference type="GO" id="GO:0045259">
    <property type="term" value="C:proton-transporting ATP synthase complex"/>
    <property type="evidence" value="ECO:0007669"/>
    <property type="project" value="UniProtKB-KW"/>
</dbReference>
<dbReference type="GO" id="GO:0043531">
    <property type="term" value="F:ADP binding"/>
    <property type="evidence" value="ECO:0007669"/>
    <property type="project" value="TreeGrafter"/>
</dbReference>
<dbReference type="GO" id="GO:0005524">
    <property type="term" value="F:ATP binding"/>
    <property type="evidence" value="ECO:0007669"/>
    <property type="project" value="UniProtKB-UniRule"/>
</dbReference>
<dbReference type="GO" id="GO:0046933">
    <property type="term" value="F:proton-transporting ATP synthase activity, rotational mechanism"/>
    <property type="evidence" value="ECO:0007669"/>
    <property type="project" value="UniProtKB-UniRule"/>
</dbReference>
<dbReference type="CDD" id="cd18113">
    <property type="entry name" value="ATP-synt_F1_alpha_C"/>
    <property type="match status" value="1"/>
</dbReference>
<dbReference type="CDD" id="cd18116">
    <property type="entry name" value="ATP-synt_F1_alpha_N"/>
    <property type="match status" value="1"/>
</dbReference>
<dbReference type="CDD" id="cd01132">
    <property type="entry name" value="F1-ATPase_alpha_CD"/>
    <property type="match status" value="1"/>
</dbReference>
<dbReference type="FunFam" id="1.20.150.20:FF:000001">
    <property type="entry name" value="ATP synthase subunit alpha"/>
    <property type="match status" value="1"/>
</dbReference>
<dbReference type="FunFam" id="2.40.30.20:FF:000001">
    <property type="entry name" value="ATP synthase subunit alpha"/>
    <property type="match status" value="1"/>
</dbReference>
<dbReference type="FunFam" id="3.40.50.300:FF:000002">
    <property type="entry name" value="ATP synthase subunit alpha"/>
    <property type="match status" value="1"/>
</dbReference>
<dbReference type="Gene3D" id="2.40.30.20">
    <property type="match status" value="1"/>
</dbReference>
<dbReference type="Gene3D" id="1.20.150.20">
    <property type="entry name" value="ATP synthase alpha/beta chain, C-terminal domain"/>
    <property type="match status" value="1"/>
</dbReference>
<dbReference type="Gene3D" id="3.40.50.300">
    <property type="entry name" value="P-loop containing nucleotide triphosphate hydrolases"/>
    <property type="match status" value="1"/>
</dbReference>
<dbReference type="HAMAP" id="MF_01346">
    <property type="entry name" value="ATP_synth_alpha_bact"/>
    <property type="match status" value="1"/>
</dbReference>
<dbReference type="InterPro" id="IPR023366">
    <property type="entry name" value="ATP_synth_asu-like_sf"/>
</dbReference>
<dbReference type="InterPro" id="IPR000793">
    <property type="entry name" value="ATP_synth_asu_C"/>
</dbReference>
<dbReference type="InterPro" id="IPR038376">
    <property type="entry name" value="ATP_synth_asu_C_sf"/>
</dbReference>
<dbReference type="InterPro" id="IPR033732">
    <property type="entry name" value="ATP_synth_F1_a_nt-bd_dom"/>
</dbReference>
<dbReference type="InterPro" id="IPR005294">
    <property type="entry name" value="ATP_synth_F1_asu"/>
</dbReference>
<dbReference type="InterPro" id="IPR020003">
    <property type="entry name" value="ATPase_a/bsu_AS"/>
</dbReference>
<dbReference type="InterPro" id="IPR004100">
    <property type="entry name" value="ATPase_F1/V1/A1_a/bsu_N"/>
</dbReference>
<dbReference type="InterPro" id="IPR036121">
    <property type="entry name" value="ATPase_F1/V1/A1_a/bsu_N_sf"/>
</dbReference>
<dbReference type="InterPro" id="IPR000194">
    <property type="entry name" value="ATPase_F1/V1/A1_a/bsu_nucl-bd"/>
</dbReference>
<dbReference type="InterPro" id="IPR027417">
    <property type="entry name" value="P-loop_NTPase"/>
</dbReference>
<dbReference type="NCBIfam" id="TIGR00962">
    <property type="entry name" value="atpA"/>
    <property type="match status" value="1"/>
</dbReference>
<dbReference type="NCBIfam" id="NF009884">
    <property type="entry name" value="PRK13343.1"/>
    <property type="match status" value="1"/>
</dbReference>
<dbReference type="PANTHER" id="PTHR48082">
    <property type="entry name" value="ATP SYNTHASE SUBUNIT ALPHA, MITOCHONDRIAL"/>
    <property type="match status" value="1"/>
</dbReference>
<dbReference type="PANTHER" id="PTHR48082:SF2">
    <property type="entry name" value="ATP SYNTHASE SUBUNIT ALPHA, MITOCHONDRIAL"/>
    <property type="match status" value="1"/>
</dbReference>
<dbReference type="Pfam" id="PF00006">
    <property type="entry name" value="ATP-synt_ab"/>
    <property type="match status" value="1"/>
</dbReference>
<dbReference type="Pfam" id="PF00306">
    <property type="entry name" value="ATP-synt_ab_C"/>
    <property type="match status" value="1"/>
</dbReference>
<dbReference type="Pfam" id="PF02874">
    <property type="entry name" value="ATP-synt_ab_N"/>
    <property type="match status" value="1"/>
</dbReference>
<dbReference type="PIRSF" id="PIRSF039088">
    <property type="entry name" value="F_ATPase_subunit_alpha"/>
    <property type="match status" value="1"/>
</dbReference>
<dbReference type="SUPFAM" id="SSF47917">
    <property type="entry name" value="C-terminal domain of alpha and beta subunits of F1 ATP synthase"/>
    <property type="match status" value="1"/>
</dbReference>
<dbReference type="SUPFAM" id="SSF50615">
    <property type="entry name" value="N-terminal domain of alpha and beta subunits of F1 ATP synthase"/>
    <property type="match status" value="1"/>
</dbReference>
<dbReference type="SUPFAM" id="SSF52540">
    <property type="entry name" value="P-loop containing nucleoside triphosphate hydrolases"/>
    <property type="match status" value="1"/>
</dbReference>
<dbReference type="PROSITE" id="PS00152">
    <property type="entry name" value="ATPASE_ALPHA_BETA"/>
    <property type="match status" value="1"/>
</dbReference>
<keyword id="KW-0066">ATP synthesis</keyword>
<keyword id="KW-0067">ATP-binding</keyword>
<keyword id="KW-0139">CF(1)</keyword>
<keyword id="KW-0150">Chloroplast</keyword>
<keyword id="KW-0375">Hydrogen ion transport</keyword>
<keyword id="KW-0406">Ion transport</keyword>
<keyword id="KW-0472">Membrane</keyword>
<keyword id="KW-0547">Nucleotide-binding</keyword>
<keyword id="KW-0934">Plastid</keyword>
<keyword id="KW-0793">Thylakoid</keyword>
<keyword id="KW-1278">Translocase</keyword>
<keyword id="KW-0813">Transport</keyword>
<name>ATPA_PYRYE</name>
<gene>
    <name evidence="1" type="primary">atpA</name>
</gene>
<feature type="chain" id="PRO_0000238435" description="ATP synthase subunit alpha, chloroplastic">
    <location>
        <begin position="1"/>
        <end position="504"/>
    </location>
</feature>
<feature type="binding site" evidence="1">
    <location>
        <begin position="170"/>
        <end position="177"/>
    </location>
    <ligand>
        <name>ATP</name>
        <dbReference type="ChEBI" id="CHEBI:30616"/>
    </ligand>
</feature>
<feature type="site" description="Required for activity" evidence="1">
    <location>
        <position position="363"/>
    </location>
</feature>
<sequence length="504" mass="54460">MVNIRPDEISSIIRQQIEKYDQDVEVANIGTVLQVGDGIARVYGLDEVMAGELLEFEDKTIGVALNLESDNVGVVLMGDGRDILEGSSVKGTGRIAQIPVGDAFLGRVVDPLARPIDDKGEPASNGTRLIESMAPGIIGRQSVCEPMQTGITAIDSMIPIGRGQRELIIGDRQTGKTAVALDTIINQKGQDVVCVYVAIGQKASSVAQVVSSLQDKGALDYTIIVAANADSPATLQYIAPYTGAALAEYFMYKGKATLVIYDDLTKQAQAYRQMSLLLRRPPGREAYPGDVFYLHSRLLERAAKLNAELGGGSMTALPIIETQAGDVSAYIPTNVISITDGQIFLSGDLFNSGIRPAINVGISVSRVGSAAQIKAMKQVAGKLKLELAQFAELEAFSQFASDLDKATQNQLARGQRLREILKQAQNSPIPVEEQTAIIYTGINGYLDDIEVSKVAEFIRELREDLKNSKPEFGENVRSTKKLEPVSEELLKRAIEDVKQGFDKA</sequence>
<proteinExistence type="inferred from homology"/>
<evidence type="ECO:0000255" key="1">
    <source>
        <dbReference type="HAMAP-Rule" id="MF_01346"/>
    </source>
</evidence>
<accession>Q1XDP5</accession>
<reference key="1">
    <citation type="submission" date="2003-11" db="EMBL/GenBank/DDBJ databases">
        <title>Whole genome sequence of Porphyra yezoensis chloroplast.</title>
        <authorList>
            <person name="Kunimoto M."/>
            <person name="Morishima K."/>
            <person name="Yoshikawa M."/>
            <person name="Fukuda S."/>
            <person name="Kobayashi T."/>
            <person name="Kobayashi M."/>
            <person name="Okazaki T."/>
            <person name="Ohara I."/>
            <person name="Nakayama I."/>
        </authorList>
    </citation>
    <scope>NUCLEOTIDE SEQUENCE [LARGE SCALE GENOMIC DNA]</scope>
    <source>
        <strain>U-51</strain>
    </source>
</reference>
<organism>
    <name type="scientific">Pyropia yezoensis</name>
    <name type="common">Susabi-nori</name>
    <name type="synonym">Porphyra yezoensis</name>
    <dbReference type="NCBI Taxonomy" id="2788"/>
    <lineage>
        <taxon>Eukaryota</taxon>
        <taxon>Rhodophyta</taxon>
        <taxon>Bangiophyceae</taxon>
        <taxon>Bangiales</taxon>
        <taxon>Bangiaceae</taxon>
        <taxon>Pyropia</taxon>
    </lineage>
</organism>